<reference key="1">
    <citation type="submission" date="2013-11" db="EMBL/GenBank/DDBJ databases">
        <authorList>
            <person name="Zheng Y."/>
            <person name="Li E."/>
            <person name="Zhan S."/>
            <person name="Cho Y.S."/>
        </authorList>
    </citation>
    <scope>NUCLEOTIDE SEQUENCE [LARGE SCALE GENOMIC DNA]</scope>
</reference>
<reference key="2">
    <citation type="unpublished observations" date="2014-06">
        <authorList>
            <person name="Puppione D.L."/>
        </authorList>
    </citation>
    <scope>IDENTIFICATION</scope>
</reference>
<organism>
    <name type="scientific">Balaenoptera acutorostrata scammoni</name>
    <name type="common">North Pacific minke whale</name>
    <name type="synonym">Balaenoptera davidsoni</name>
    <dbReference type="NCBI Taxonomy" id="310752"/>
    <lineage>
        <taxon>Eukaryota</taxon>
        <taxon>Metazoa</taxon>
        <taxon>Chordata</taxon>
        <taxon>Craniata</taxon>
        <taxon>Vertebrata</taxon>
        <taxon>Euteleostomi</taxon>
        <taxon>Mammalia</taxon>
        <taxon>Eutheria</taxon>
        <taxon>Laurasiatheria</taxon>
        <taxon>Artiodactyla</taxon>
        <taxon>Whippomorpha</taxon>
        <taxon>Cetacea</taxon>
        <taxon>Mysticeti</taxon>
        <taxon>Balaenopteridae</taxon>
        <taxon>Balaenoptera</taxon>
    </lineage>
</organism>
<comment type="function">
    <text evidence="1">APOE is an apolipoprotein, a protein associating with lipid particles, that mainly functions in lipoprotein-mediated lipid transport between organs via the plasma and interstitial fluids. APOE is a core component of plasma lipoproteins and is involved in their production, conversion and clearance. Apolipoproteins are amphipathic molecules that interact both with lipids of the lipoprotein particle core and the aqueous environment of the plasma. As such, APOE associates with chylomicrons, chylomicron remnants, very low density lipoproteins (VLDL) and intermediate density lipoproteins (IDL) but shows a preferential binding to high-density lipoproteins (HDL). It also binds a wide range of cellular receptors including the LDL receptor/LDLR and the very low-density lipoprotein receptor/VLDLR that mediate the cellular uptake of the APOE-containing lipoprotein particles. Finally, APOE also has a heparin-binding activity and binds heparan-sulfate proteoglycans on the surface of cells, a property that supports the capture and the receptor-mediated uptake of APOE-containing lipoproteins by cells.</text>
</comment>
<comment type="subunit">
    <text evidence="1">Homotetramer. May interact with ABCA1; functionally associated with ABCA1 in the biogenesis of HDLs. May interact with APP/A4 amyloid-beta peptide; the interaction is extremely stable in vitro but its physiological significance is unclear. May interact with MAPT. May interact with MAP2. In the cerebrospinal fluid, interacts with secreted SORL1. Interacts with PMEL; this allows the loading of PMEL luminal fragment on ILVs to induce fibril nucleation.</text>
</comment>
<comment type="subcellular location">
    <subcellularLocation>
        <location evidence="1">Secreted</location>
    </subcellularLocation>
    <subcellularLocation>
        <location evidence="1">Secreted</location>
        <location evidence="1">Extracellular space</location>
    </subcellularLocation>
    <subcellularLocation>
        <location evidence="1">Secreted</location>
        <location evidence="1">Extracellular space</location>
        <location evidence="1">Extracellular matrix</location>
    </subcellularLocation>
    <subcellularLocation>
        <location evidence="1">Extracellular vesicle</location>
    </subcellularLocation>
    <subcellularLocation>
        <location evidence="1">Endosome</location>
        <location evidence="1">Multivesicular body</location>
    </subcellularLocation>
    <text evidence="1">In the plasma, APOE is associated with chylomicrons, chylomicrons remnants, VLDL, LDL and HDL lipoproteins. Lipid poor oligomeric APOE is associated with the extracellular matrix in a calcium- and heparan-sulfate proteoglycans-dependent manner. Lipidation induces the release from the extracellular matrix. Colocalizes with CD63 and PMEL at exosomes and in intraluminal vesicles within multivesicular endosomes.</text>
</comment>
<comment type="PTM">
    <text evidence="1">APOE exists as multiple glycosylated and sialylated glycoforms within cells and in plasma. The extent of glycosylation and sialylation are tissue and context specific.</text>
</comment>
<comment type="PTM">
    <text evidence="1">Glycated in plasma VLDL.</text>
</comment>
<comment type="PTM">
    <text evidence="1">Phosphorylated by FAM20C in the extracellular medium.</text>
</comment>
<comment type="similarity">
    <text evidence="3">Belongs to the apolipoprotein A1/A4/E family.</text>
</comment>
<evidence type="ECO:0000250" key="1">
    <source>
        <dbReference type="UniProtKB" id="P02649"/>
    </source>
</evidence>
<evidence type="ECO:0000255" key="2"/>
<evidence type="ECO:0000305" key="3"/>
<gene>
    <name type="primary">APOE</name>
</gene>
<name>APOE_BALAS</name>
<feature type="signal peptide" evidence="2">
    <location>
        <begin position="1"/>
        <end position="18"/>
    </location>
</feature>
<feature type="chain" id="PRO_0000429975" description="Apolipoprotein E">
    <location>
        <begin position="19"/>
        <end position="313"/>
    </location>
</feature>
<feature type="repeat" description="1">
    <location>
        <begin position="79"/>
        <end position="100"/>
    </location>
</feature>
<feature type="repeat" description="2">
    <location>
        <begin position="101"/>
        <end position="122"/>
    </location>
</feature>
<feature type="repeat" description="3">
    <location>
        <begin position="123"/>
        <end position="144"/>
    </location>
</feature>
<feature type="repeat" description="4">
    <location>
        <begin position="145"/>
        <end position="166"/>
    </location>
</feature>
<feature type="repeat" description="5">
    <location>
        <begin position="167"/>
        <end position="188"/>
    </location>
</feature>
<feature type="repeat" description="6">
    <location>
        <begin position="189"/>
        <end position="209"/>
    </location>
</feature>
<feature type="repeat" description="7">
    <location>
        <begin position="210"/>
        <end position="229"/>
    </location>
</feature>
<feature type="repeat" description="8">
    <location>
        <begin position="230"/>
        <end position="251"/>
    </location>
</feature>
<feature type="region of interest" description="8 X 22 AA approximate tandem repeats">
    <location>
        <begin position="79"/>
        <end position="251"/>
    </location>
</feature>
<feature type="region of interest" description="LDL and other lipoprotein receptors binding" evidence="1">
    <location>
        <begin position="157"/>
        <end position="167"/>
    </location>
</feature>
<feature type="region of interest" description="Lipid-binding and lipoprotein association" evidence="1">
    <location>
        <begin position="209"/>
        <end position="286"/>
    </location>
</feature>
<feature type="region of interest" description="Homooligomerization" evidence="1">
    <location>
        <begin position="262"/>
        <end position="313"/>
    </location>
</feature>
<feature type="region of interest" description="Specificity for association with VLDL" evidence="1">
    <location>
        <begin position="274"/>
        <end position="286"/>
    </location>
</feature>
<feature type="binding site" evidence="1">
    <location>
        <begin position="161"/>
        <end position="164"/>
    </location>
    <ligand>
        <name>heparin</name>
        <dbReference type="ChEBI" id="CHEBI:28304"/>
    </ligand>
</feature>
<feature type="binding site" evidence="1">
    <location>
        <begin position="225"/>
        <end position="232"/>
    </location>
    <ligand>
        <name>heparin</name>
        <dbReference type="ChEBI" id="CHEBI:28304"/>
    </ligand>
</feature>
<accession>P0DML7</accession>
<proteinExistence type="inferred from homology"/>
<dbReference type="EMBL" id="ATDI01036736">
    <property type="status" value="NOT_ANNOTATED_CDS"/>
    <property type="molecule type" value="Genomic_DNA"/>
</dbReference>
<dbReference type="RefSeq" id="XP_007168180.1">
    <property type="nucleotide sequence ID" value="XM_007168118.1"/>
</dbReference>
<dbReference type="SMR" id="P0DML7"/>
<dbReference type="FunCoup" id="P0DML7">
    <property type="interactions" value="247"/>
</dbReference>
<dbReference type="STRING" id="310752.P0DML7"/>
<dbReference type="GeneID" id="103004452"/>
<dbReference type="KEGG" id="bacu:103004452"/>
<dbReference type="CTD" id="348"/>
<dbReference type="InParanoid" id="P0DML7"/>
<dbReference type="Proteomes" id="UP000261681">
    <property type="component" value="Unplaced"/>
</dbReference>
<dbReference type="GO" id="GO:0042627">
    <property type="term" value="C:chylomicron"/>
    <property type="evidence" value="ECO:0007669"/>
    <property type="project" value="UniProtKB-KW"/>
</dbReference>
<dbReference type="GO" id="GO:0070062">
    <property type="term" value="C:extracellular exosome"/>
    <property type="evidence" value="ECO:0000250"/>
    <property type="project" value="UniProtKB"/>
</dbReference>
<dbReference type="GO" id="GO:0031012">
    <property type="term" value="C:extracellular matrix"/>
    <property type="evidence" value="ECO:0000250"/>
    <property type="project" value="UniProtKB"/>
</dbReference>
<dbReference type="GO" id="GO:0005615">
    <property type="term" value="C:extracellular space"/>
    <property type="evidence" value="ECO:0000250"/>
    <property type="project" value="UniProtKB"/>
</dbReference>
<dbReference type="GO" id="GO:0034364">
    <property type="term" value="C:high-density lipoprotein particle"/>
    <property type="evidence" value="ECO:0000250"/>
    <property type="project" value="UniProtKB"/>
</dbReference>
<dbReference type="GO" id="GO:0034363">
    <property type="term" value="C:intermediate-density lipoprotein particle"/>
    <property type="evidence" value="ECO:0000250"/>
    <property type="project" value="UniProtKB"/>
</dbReference>
<dbReference type="GO" id="GO:0034362">
    <property type="term" value="C:low-density lipoprotein particle"/>
    <property type="evidence" value="ECO:0000250"/>
    <property type="project" value="UniProtKB"/>
</dbReference>
<dbReference type="GO" id="GO:0097487">
    <property type="term" value="C:multivesicular body, internal vesicle"/>
    <property type="evidence" value="ECO:0000250"/>
    <property type="project" value="UniProtKB"/>
</dbReference>
<dbReference type="GO" id="GO:0034361">
    <property type="term" value="C:very-low-density lipoprotein particle"/>
    <property type="evidence" value="ECO:0000250"/>
    <property type="project" value="UniProtKB"/>
</dbReference>
<dbReference type="GO" id="GO:0120020">
    <property type="term" value="F:cholesterol transfer activity"/>
    <property type="evidence" value="ECO:0007669"/>
    <property type="project" value="TreeGrafter"/>
</dbReference>
<dbReference type="GO" id="GO:0043395">
    <property type="term" value="F:heparan sulfate proteoglycan binding"/>
    <property type="evidence" value="ECO:0000250"/>
    <property type="project" value="UniProtKB"/>
</dbReference>
<dbReference type="GO" id="GO:0008201">
    <property type="term" value="F:heparin binding"/>
    <property type="evidence" value="ECO:0000250"/>
    <property type="project" value="UniProtKB"/>
</dbReference>
<dbReference type="GO" id="GO:0042802">
    <property type="term" value="F:identical protein binding"/>
    <property type="evidence" value="ECO:0000250"/>
    <property type="project" value="UniProtKB"/>
</dbReference>
<dbReference type="GO" id="GO:0050750">
    <property type="term" value="F:low-density lipoprotein particle receptor binding"/>
    <property type="evidence" value="ECO:0000250"/>
    <property type="project" value="UniProtKB"/>
</dbReference>
<dbReference type="GO" id="GO:0060228">
    <property type="term" value="F:phosphatidylcholine-sterol O-acyltransferase activator activity"/>
    <property type="evidence" value="ECO:0007669"/>
    <property type="project" value="TreeGrafter"/>
</dbReference>
<dbReference type="GO" id="GO:0005543">
    <property type="term" value="F:phospholipid binding"/>
    <property type="evidence" value="ECO:0007669"/>
    <property type="project" value="TreeGrafter"/>
</dbReference>
<dbReference type="GO" id="GO:0055090">
    <property type="term" value="P:acylglycerol homeostasis"/>
    <property type="evidence" value="ECO:0007669"/>
    <property type="project" value="TreeGrafter"/>
</dbReference>
<dbReference type="GO" id="GO:0033344">
    <property type="term" value="P:cholesterol efflux"/>
    <property type="evidence" value="ECO:0000250"/>
    <property type="project" value="UniProtKB"/>
</dbReference>
<dbReference type="GO" id="GO:0008203">
    <property type="term" value="P:cholesterol metabolic process"/>
    <property type="evidence" value="ECO:0007669"/>
    <property type="project" value="TreeGrafter"/>
</dbReference>
<dbReference type="GO" id="GO:0034382">
    <property type="term" value="P:chylomicron remnant clearance"/>
    <property type="evidence" value="ECO:0000250"/>
    <property type="project" value="UniProtKB"/>
</dbReference>
<dbReference type="GO" id="GO:0034380">
    <property type="term" value="P:high-density lipoprotein particle assembly"/>
    <property type="evidence" value="ECO:0000250"/>
    <property type="project" value="UniProtKB"/>
</dbReference>
<dbReference type="GO" id="GO:0071831">
    <property type="term" value="P:intermediate-density lipoprotein particle clearance"/>
    <property type="evidence" value="ECO:0000250"/>
    <property type="project" value="UniProtKB"/>
</dbReference>
<dbReference type="GO" id="GO:0042158">
    <property type="term" value="P:lipoprotein biosynthetic process"/>
    <property type="evidence" value="ECO:0000250"/>
    <property type="project" value="UniProtKB"/>
</dbReference>
<dbReference type="GO" id="GO:0032438">
    <property type="term" value="P:melanosome organization"/>
    <property type="evidence" value="ECO:0000250"/>
    <property type="project" value="UniProtKB"/>
</dbReference>
<dbReference type="GO" id="GO:0033700">
    <property type="term" value="P:phospholipid efflux"/>
    <property type="evidence" value="ECO:0007669"/>
    <property type="project" value="TreeGrafter"/>
</dbReference>
<dbReference type="GO" id="GO:0071830">
    <property type="term" value="P:triglyceride-rich lipoprotein particle clearance"/>
    <property type="evidence" value="ECO:0000250"/>
    <property type="project" value="UniProtKB"/>
</dbReference>
<dbReference type="GO" id="GO:0034447">
    <property type="term" value="P:very-low-density lipoprotein particle clearance"/>
    <property type="evidence" value="ECO:0000250"/>
    <property type="project" value="UniProtKB"/>
</dbReference>
<dbReference type="FunFam" id="1.20.120.20:FF:000002">
    <property type="entry name" value="Apolipoprotein E"/>
    <property type="match status" value="1"/>
</dbReference>
<dbReference type="FunFam" id="1.20.120.20:FF:000003">
    <property type="entry name" value="Apolipoprotein E"/>
    <property type="match status" value="1"/>
</dbReference>
<dbReference type="Gene3D" id="1.20.120.20">
    <property type="entry name" value="Apolipoprotein"/>
    <property type="match status" value="2"/>
</dbReference>
<dbReference type="InterPro" id="IPR000074">
    <property type="entry name" value="ApoA_E"/>
</dbReference>
<dbReference type="InterPro" id="IPR050163">
    <property type="entry name" value="Apolipoprotein_A1/A4/E"/>
</dbReference>
<dbReference type="PANTHER" id="PTHR18976">
    <property type="entry name" value="APOLIPOPROTEIN"/>
    <property type="match status" value="1"/>
</dbReference>
<dbReference type="PANTHER" id="PTHR18976:SF2">
    <property type="entry name" value="APOLIPOPROTEIN E"/>
    <property type="match status" value="1"/>
</dbReference>
<dbReference type="Pfam" id="PF01442">
    <property type="entry name" value="Apolipoprotein"/>
    <property type="match status" value="1"/>
</dbReference>
<dbReference type="SUPFAM" id="SSF58113">
    <property type="entry name" value="Apolipoprotein A-I"/>
    <property type="match status" value="1"/>
</dbReference>
<sequence length="313" mass="35892">MKVLWVALVITLLAGCQAEVEPEPEPEVQLGREWPGWQGSQPWEQALGRFWDYLRWVQTLSDQVQEELLSTQVIQELTVLMDETMKEVKAYREELEEQLGPIAQETQARVSKELQAAQARLASDMEDVRSRLAQYRSEVQAVMGQTTDELRGRLASHLRKLRKRLLRDAEDLQKRLAVYRAGAVEGSERSVSAIRERLGPLMEKGRGRAGTLASQTLRERAEAWHQKLRGRVEEMGTQARDHLEEIREQLEEVRAKVEEQGSQIRLQAEAFQARLKSWFEPLVEDMQRQWAGLVEKVQLAMATSSTSAPSENH</sequence>
<protein>
    <recommendedName>
        <fullName>Apolipoprotein E</fullName>
        <shortName>Apo-E</shortName>
    </recommendedName>
</protein>
<keyword id="KW-0162">Chylomicron</keyword>
<keyword id="KW-0967">Endosome</keyword>
<keyword id="KW-0272">Extracellular matrix</keyword>
<keyword id="KW-0345">HDL</keyword>
<keyword id="KW-0358">Heparin-binding</keyword>
<keyword id="KW-0445">Lipid transport</keyword>
<keyword id="KW-0446">Lipid-binding</keyword>
<keyword id="KW-0597">Phosphoprotein</keyword>
<keyword id="KW-1185">Reference proteome</keyword>
<keyword id="KW-0677">Repeat</keyword>
<keyword id="KW-0964">Secreted</keyword>
<keyword id="KW-0732">Signal</keyword>
<keyword id="KW-0813">Transport</keyword>
<keyword id="KW-0850">VLDL</keyword>